<keyword id="KW-0058">Aromatic hydrocarbons catabolism</keyword>
<keyword id="KW-0520">NAD</keyword>
<keyword id="KW-0560">Oxidoreductase</keyword>
<keyword id="KW-0614">Plasmid</keyword>
<accession>P27137</accession>
<accession>Q46M69</accession>
<gene>
    <name type="primary">tfdFI</name>
    <name type="synonym">tfdF</name>
    <name type="ordered locus">Reut_D6463</name>
</gene>
<comment type="catalytic activity">
    <reaction>
        <text>3-oxoadipate + NAD(+) = maleylacetate + NADH + H(+)</text>
        <dbReference type="Rhea" id="RHEA:16981"/>
        <dbReference type="ChEBI" id="CHEBI:15378"/>
        <dbReference type="ChEBI" id="CHEBI:15775"/>
        <dbReference type="ChEBI" id="CHEBI:16468"/>
        <dbReference type="ChEBI" id="CHEBI:57540"/>
        <dbReference type="ChEBI" id="CHEBI:57945"/>
        <dbReference type="EC" id="1.3.1.32"/>
    </reaction>
</comment>
<comment type="catalytic activity">
    <reaction>
        <text>3-oxoadipate + NADP(+) = maleylacetate + NADPH + H(+)</text>
        <dbReference type="Rhea" id="RHEA:16985"/>
        <dbReference type="ChEBI" id="CHEBI:15378"/>
        <dbReference type="ChEBI" id="CHEBI:15775"/>
        <dbReference type="ChEBI" id="CHEBI:16468"/>
        <dbReference type="ChEBI" id="CHEBI:57783"/>
        <dbReference type="ChEBI" id="CHEBI:58349"/>
        <dbReference type="EC" id="1.3.1.32"/>
    </reaction>
</comment>
<comment type="pathway">
    <text>Aromatic compound metabolism; 3-chlorocatechol degradation.</text>
</comment>
<comment type="subunit">
    <text evidence="1">Homodimer.</text>
</comment>
<comment type="similarity">
    <text evidence="2">Belongs to the iron-containing alcohol dehydrogenase family.</text>
</comment>
<dbReference type="EC" id="1.3.1.32"/>
<dbReference type="EMBL" id="M35097">
    <property type="protein sequence ID" value="AAA98265.1"/>
    <property type="molecule type" value="Genomic_DNA"/>
</dbReference>
<dbReference type="EMBL" id="AY365053">
    <property type="protein sequence ID" value="AAR31036.1"/>
    <property type="molecule type" value="Genomic_DNA"/>
</dbReference>
<dbReference type="EMBL" id="CP000093">
    <property type="protein sequence ID" value="AAZ65761.1"/>
    <property type="molecule type" value="Genomic_DNA"/>
</dbReference>
<dbReference type="PIR" id="D35255">
    <property type="entry name" value="D35255"/>
</dbReference>
<dbReference type="RefSeq" id="WP_011178383.1">
    <property type="nucleotide sequence ID" value="NZ_AY365053.1"/>
</dbReference>
<dbReference type="SMR" id="P27137"/>
<dbReference type="DNASU" id="3607954"/>
<dbReference type="KEGG" id="reu:Reut_D6463"/>
<dbReference type="HOGENOM" id="CLU_007207_0_1_4"/>
<dbReference type="OrthoDB" id="3812122at2"/>
<dbReference type="BioCyc" id="MetaCyc:MONOMER-14414"/>
<dbReference type="UniPathway" id="UPA00083"/>
<dbReference type="GO" id="GO:0004022">
    <property type="term" value="F:alcohol dehydrogenase (NAD+) activity"/>
    <property type="evidence" value="ECO:0007669"/>
    <property type="project" value="TreeGrafter"/>
</dbReference>
<dbReference type="GO" id="GO:0018506">
    <property type="term" value="F:maleylacetate reductase activity"/>
    <property type="evidence" value="ECO:0007669"/>
    <property type="project" value="UniProtKB-EC"/>
</dbReference>
<dbReference type="GO" id="GO:0046872">
    <property type="term" value="F:metal ion binding"/>
    <property type="evidence" value="ECO:0007669"/>
    <property type="project" value="InterPro"/>
</dbReference>
<dbReference type="GO" id="GO:1901168">
    <property type="term" value="P:3-chlorocatechol catabolic process"/>
    <property type="evidence" value="ECO:0000314"/>
    <property type="project" value="CACAO"/>
</dbReference>
<dbReference type="CDD" id="cd08177">
    <property type="entry name" value="MAR"/>
    <property type="match status" value="1"/>
</dbReference>
<dbReference type="FunFam" id="1.20.1090.10:FF:000010">
    <property type="entry name" value="Maleylacetate reductase 1"/>
    <property type="match status" value="1"/>
</dbReference>
<dbReference type="FunFam" id="3.40.50.1970:FF:000015">
    <property type="entry name" value="Maleylacetate reductase 1"/>
    <property type="match status" value="1"/>
</dbReference>
<dbReference type="Gene3D" id="3.40.50.1970">
    <property type="match status" value="1"/>
</dbReference>
<dbReference type="Gene3D" id="1.20.1090.10">
    <property type="entry name" value="Dehydroquinate synthase-like - alpha domain"/>
    <property type="match status" value="1"/>
</dbReference>
<dbReference type="InterPro" id="IPR001670">
    <property type="entry name" value="ADH_Fe/GldA"/>
</dbReference>
<dbReference type="InterPro" id="IPR056798">
    <property type="entry name" value="ADH_Fe_C"/>
</dbReference>
<dbReference type="InterPro" id="IPR039697">
    <property type="entry name" value="Alcohol_dehydrogenase_Fe"/>
</dbReference>
<dbReference type="InterPro" id="IPR034786">
    <property type="entry name" value="MAR"/>
</dbReference>
<dbReference type="PANTHER" id="PTHR11496">
    <property type="entry name" value="ALCOHOL DEHYDROGENASE"/>
    <property type="match status" value="1"/>
</dbReference>
<dbReference type="PANTHER" id="PTHR11496:SF102">
    <property type="entry name" value="ALCOHOL DEHYDROGENASE 4"/>
    <property type="match status" value="1"/>
</dbReference>
<dbReference type="Pfam" id="PF25137">
    <property type="entry name" value="ADH_Fe_C"/>
    <property type="match status" value="1"/>
</dbReference>
<dbReference type="Pfam" id="PF00465">
    <property type="entry name" value="Fe-ADH"/>
    <property type="match status" value="1"/>
</dbReference>
<dbReference type="SUPFAM" id="SSF56796">
    <property type="entry name" value="Dehydroquinate synthase-like"/>
    <property type="match status" value="1"/>
</dbReference>
<geneLocation type="plasmid">
    <name>pJP4</name>
</geneLocation>
<geneLocation type="plasmid">
    <name>pPJ4</name>
</geneLocation>
<protein>
    <recommendedName>
        <fullName>Maleylacetate reductase 1</fullName>
        <ecNumber>1.3.1.32</ecNumber>
    </recommendedName>
    <alternativeName>
        <fullName>Maleylacetate reductase I</fullName>
    </alternativeName>
</protein>
<organism>
    <name type="scientific">Cupriavidus pinatubonensis (strain JMP 134 / LMG 1197)</name>
    <name type="common">Cupriavidus necator (strain JMP 134)</name>
    <dbReference type="NCBI Taxonomy" id="264198"/>
    <lineage>
        <taxon>Bacteria</taxon>
        <taxon>Pseudomonadati</taxon>
        <taxon>Pseudomonadota</taxon>
        <taxon>Betaproteobacteria</taxon>
        <taxon>Burkholderiales</taxon>
        <taxon>Burkholderiaceae</taxon>
        <taxon>Cupriavidus</taxon>
    </lineage>
</organism>
<evidence type="ECO:0000250" key="1"/>
<evidence type="ECO:0000305" key="2"/>
<reference key="1">
    <citation type="journal article" date="1990" name="J. Bacteriol.">
        <title>Organization and sequence analysis of the 2,4-dichlorophenol hydroxylase and dichlorocatechol oxidative operons of plasmid pJP4.</title>
        <authorList>
            <person name="Perkins E.J."/>
            <person name="Gordon M.P."/>
            <person name="Caceres O."/>
            <person name="Lurquin P.F."/>
        </authorList>
    </citation>
    <scope>NUCLEOTIDE SEQUENCE [GENOMIC DNA]</scope>
    <source>
        <plasmid>pJP4</plasmid>
    </source>
</reference>
<reference key="2">
    <citation type="journal article" date="2004" name="Environ. Microbiol.">
        <title>Genetic organization of the catabolic plasmid pJP4 from Ralstonia eutropha JMP134 (pJP4) reveals mechanisms of adaptation to chloroaromatic pollutants and evolution of specialized chloroaromatic degradation pathways.</title>
        <authorList>
            <person name="Trefault N."/>
            <person name="De la Iglesia R."/>
            <person name="Molina A.M."/>
            <person name="Manzano M."/>
            <person name="Ledger T."/>
            <person name="Perez-Pantoja D."/>
            <person name="Sanchez M.A."/>
            <person name="Stuardo M."/>
            <person name="Gonzalez B."/>
        </authorList>
    </citation>
    <scope>NUCLEOTIDE SEQUENCE [GENOMIC DNA]</scope>
    <source>
        <plasmid>pJP4</plasmid>
    </source>
</reference>
<reference key="3">
    <citation type="journal article" date="2010" name="PLoS ONE">
        <title>The complete multipartite genome sequence of Cupriavidus necator JMP134, a versatile pollutant degrader.</title>
        <authorList>
            <person name="Lykidis A."/>
            <person name="Perez-Pantoja D."/>
            <person name="Ledger T."/>
            <person name="Mavromatis K."/>
            <person name="Anderson I.J."/>
            <person name="Ivanova N.N."/>
            <person name="Hooper S.D."/>
            <person name="Lapidus A."/>
            <person name="Lucas S."/>
            <person name="Gonzalez B."/>
            <person name="Kyrpides N.C."/>
        </authorList>
    </citation>
    <scope>NUCLEOTIDE SEQUENCE [LARGE SCALE GENOMIC DNA]</scope>
    <source>
        <strain>JMP134 / LMG 1197</strain>
        <plasmid>pPJ4</plasmid>
    </source>
</reference>
<sequence>MKKFTLDYLSPRVVFGAGTASALPDEIGRLGARRPLVLSSPEQRELAKDIVRPIGDRVAGYFDGATMHVPVDVIQKAERAFNDTDADSIIAIGGGSTTGLAKILSMNLDVPSLVIPTTYAGSEMTTIWGVTEGGMKRTGRDPKVLPKTVIYDPLLTVDLPLAISVTSALNAIAHAAEGLYSADLNPVLETMCKQGICALFDAIPRLVAKPTDAEARTDALFGAWMCGTALCHLGMGLHHKLCHTLGGTLNLPHAETHAIVLPHALAYNLPYAAPAERLLQEVAGSSDVPSALYDLARNAGAPLSLAEIGMRPEDIPRVRDLALRDQYPNPRPLESDALETLLVNAFRGRRPDFK</sequence>
<feature type="chain" id="PRO_0000087851" description="Maleylacetate reductase 1">
    <location>
        <begin position="1"/>
        <end position="354"/>
    </location>
</feature>
<name>TFDF1_CUPPJ</name>
<proteinExistence type="inferred from homology"/>